<keyword id="KW-0067">ATP-binding</keyword>
<keyword id="KW-0238">DNA-binding</keyword>
<keyword id="KW-0347">Helicase</keyword>
<keyword id="KW-0378">Hydrolase</keyword>
<keyword id="KW-0413">Isomerase</keyword>
<keyword id="KW-0547">Nucleotide-binding</keyword>
<organism>
    <name type="scientific">Staphylococcus aureus (strain MW2)</name>
    <dbReference type="NCBI Taxonomy" id="196620"/>
    <lineage>
        <taxon>Bacteria</taxon>
        <taxon>Bacillati</taxon>
        <taxon>Bacillota</taxon>
        <taxon>Bacilli</taxon>
        <taxon>Bacillales</taxon>
        <taxon>Staphylococcaceae</taxon>
        <taxon>Staphylococcus</taxon>
    </lineage>
</organism>
<name>PCRA_STAAW</name>
<sequence length="730" mass="84074">MNALLNHMNTEQSEAVKTTEGPLLIMAGAGSGKTRVLTHRIAYLLDEKDVSPYNVLAITFTNKAAREMKERVQKLVGDQAEVIWMSTFHSMCVRILRRDADRIGIERNFTIIDPTDQKSVIKDVLKNENIDSKKFEPRMFIGAISNLKNELKTPADAQKEATDYHSQMVATVYSGYQRQLSRNEALDFDDLIMTTINLFERVPEVLEYYQNKFQYIHVDEYQDTNKAQYTLVKLLASKFKNLCVVGDSDQSIYGWRGADIQNILSFEKDYPEANTIFLEQNYRSTKTILNAANEVIKNNSERKPKGLWTANTNGEKIHYYEAMTERDEAEFVIREIMKHQRNGKKYQDMAILYRTNAQSRVLEETFMKSNMPYTMVGGQKFYDRKEIKDLLSYLRIIANSNDDISLQRIINVPKRGVGPSSVEKVQNYALQNNISMFDALGEADFIGLSKKVTQECLNFYELIQSLIKEQEFLEIHEIVDEVLQKSGYREMLERENTLESRSRLENIDEFMSVPKDYEENTPLEEQSLINFLTDLSLVADIDEADTENGVTLMTMHSAKGLEFPIVFIMGMEESLFPHIRAIKSEDDHEMQEERRICYVAITRAEEVLYITHATSRMLFGRPQSNMPSRFLKEIPESLLENHSSGKRQTIQPKAKPFAKRGFSQRTTSTKKQVLSSDWNVGDKVMHKAWGEGMVSNVNEKNGSIELDIIFKSQGPKRLLAQFAPIEKKED</sequence>
<accession>Q8NVT1</accession>
<reference key="1">
    <citation type="journal article" date="2002" name="Lancet">
        <title>Genome and virulence determinants of high virulence community-acquired MRSA.</title>
        <authorList>
            <person name="Baba T."/>
            <person name="Takeuchi F."/>
            <person name="Kuroda M."/>
            <person name="Yuzawa H."/>
            <person name="Aoki K."/>
            <person name="Oguchi A."/>
            <person name="Nagai Y."/>
            <person name="Iwama N."/>
            <person name="Asano K."/>
            <person name="Naimi T."/>
            <person name="Kuroda H."/>
            <person name="Cui L."/>
            <person name="Yamamoto K."/>
            <person name="Hiramatsu K."/>
        </authorList>
    </citation>
    <scope>NUCLEOTIDE SEQUENCE [LARGE SCALE GENOMIC DNA]</scope>
    <source>
        <strain>MW2</strain>
    </source>
</reference>
<feature type="chain" id="PRO_0000102062" description="ATP-dependent DNA helicase PcrA">
    <location>
        <begin position="1"/>
        <end position="730"/>
    </location>
</feature>
<feature type="domain" description="UvrD-like helicase ATP-binding" evidence="2">
    <location>
        <begin position="6"/>
        <end position="285"/>
    </location>
</feature>
<feature type="domain" description="UvrD-like helicase C-terminal" evidence="3">
    <location>
        <begin position="286"/>
        <end position="560"/>
    </location>
</feature>
<feature type="region of interest" description="Disordered" evidence="4">
    <location>
        <begin position="641"/>
        <end position="668"/>
    </location>
</feature>
<feature type="compositionally biased region" description="Polar residues" evidence="4">
    <location>
        <begin position="641"/>
        <end position="651"/>
    </location>
</feature>
<feature type="binding site" evidence="2">
    <location>
        <begin position="30"/>
        <end position="35"/>
    </location>
    <ligand>
        <name>ATP</name>
        <dbReference type="ChEBI" id="CHEBI:30616"/>
    </ligand>
</feature>
<feature type="binding site" evidence="1">
    <location>
        <position position="283"/>
    </location>
    <ligand>
        <name>ATP</name>
        <dbReference type="ChEBI" id="CHEBI:30616"/>
    </ligand>
</feature>
<evidence type="ECO:0000250" key="1"/>
<evidence type="ECO:0000255" key="2">
    <source>
        <dbReference type="PROSITE-ProRule" id="PRU00560"/>
    </source>
</evidence>
<evidence type="ECO:0000255" key="3">
    <source>
        <dbReference type="PROSITE-ProRule" id="PRU00617"/>
    </source>
</evidence>
<evidence type="ECO:0000256" key="4">
    <source>
        <dbReference type="SAM" id="MobiDB-lite"/>
    </source>
</evidence>
<evidence type="ECO:0000305" key="5"/>
<comment type="function">
    <text evidence="1">Essential helicase.</text>
</comment>
<comment type="catalytic activity">
    <reaction>
        <text>Couples ATP hydrolysis with the unwinding of duplex DNA by translocating in the 3'-5' direction.</text>
        <dbReference type="EC" id="5.6.2.4"/>
    </reaction>
</comment>
<comment type="catalytic activity">
    <reaction>
        <text>ATP + H2O = ADP + phosphate + H(+)</text>
        <dbReference type="Rhea" id="RHEA:13065"/>
        <dbReference type="ChEBI" id="CHEBI:15377"/>
        <dbReference type="ChEBI" id="CHEBI:15378"/>
        <dbReference type="ChEBI" id="CHEBI:30616"/>
        <dbReference type="ChEBI" id="CHEBI:43474"/>
        <dbReference type="ChEBI" id="CHEBI:456216"/>
        <dbReference type="EC" id="5.6.2.4"/>
    </reaction>
</comment>
<comment type="similarity">
    <text evidence="5">Belongs to the helicase family. UvrD subfamily.</text>
</comment>
<protein>
    <recommendedName>
        <fullName>ATP-dependent DNA helicase PcrA</fullName>
        <ecNumber>5.6.2.4</ecNumber>
    </recommendedName>
    <alternativeName>
        <fullName evidence="5">DNA 3'-5' helicase PcrA</fullName>
    </alternativeName>
</protein>
<proteinExistence type="inferred from homology"/>
<dbReference type="EC" id="5.6.2.4"/>
<dbReference type="EMBL" id="BA000033">
    <property type="protein sequence ID" value="BAB95711.1"/>
    <property type="molecule type" value="Genomic_DNA"/>
</dbReference>
<dbReference type="RefSeq" id="WP_000992921.1">
    <property type="nucleotide sequence ID" value="NC_003923.1"/>
</dbReference>
<dbReference type="SMR" id="Q8NVT1"/>
<dbReference type="KEGG" id="sam:MW1846"/>
<dbReference type="HOGENOM" id="CLU_004585_5_2_9"/>
<dbReference type="GO" id="GO:0005829">
    <property type="term" value="C:cytosol"/>
    <property type="evidence" value="ECO:0007669"/>
    <property type="project" value="TreeGrafter"/>
</dbReference>
<dbReference type="GO" id="GO:0033202">
    <property type="term" value="C:DNA helicase complex"/>
    <property type="evidence" value="ECO:0007669"/>
    <property type="project" value="TreeGrafter"/>
</dbReference>
<dbReference type="GO" id="GO:0043138">
    <property type="term" value="F:3'-5' DNA helicase activity"/>
    <property type="evidence" value="ECO:0007669"/>
    <property type="project" value="TreeGrafter"/>
</dbReference>
<dbReference type="GO" id="GO:0005524">
    <property type="term" value="F:ATP binding"/>
    <property type="evidence" value="ECO:0007669"/>
    <property type="project" value="UniProtKB-KW"/>
</dbReference>
<dbReference type="GO" id="GO:0016887">
    <property type="term" value="F:ATP hydrolysis activity"/>
    <property type="evidence" value="ECO:0007669"/>
    <property type="project" value="RHEA"/>
</dbReference>
<dbReference type="GO" id="GO:0003677">
    <property type="term" value="F:DNA binding"/>
    <property type="evidence" value="ECO:0007669"/>
    <property type="project" value="UniProtKB-KW"/>
</dbReference>
<dbReference type="GO" id="GO:0006260">
    <property type="term" value="P:DNA replication"/>
    <property type="evidence" value="ECO:0007669"/>
    <property type="project" value="InterPro"/>
</dbReference>
<dbReference type="GO" id="GO:0000725">
    <property type="term" value="P:recombinational repair"/>
    <property type="evidence" value="ECO:0007669"/>
    <property type="project" value="TreeGrafter"/>
</dbReference>
<dbReference type="CDD" id="cd17932">
    <property type="entry name" value="DEXQc_UvrD"/>
    <property type="match status" value="1"/>
</dbReference>
<dbReference type="CDD" id="cd18807">
    <property type="entry name" value="SF1_C_UvrD"/>
    <property type="match status" value="1"/>
</dbReference>
<dbReference type="FunFam" id="1.10.10.160:FF:000001">
    <property type="entry name" value="ATP-dependent DNA helicase"/>
    <property type="match status" value="1"/>
</dbReference>
<dbReference type="FunFam" id="1.10.486.10:FF:000003">
    <property type="entry name" value="ATP-dependent DNA helicase"/>
    <property type="match status" value="1"/>
</dbReference>
<dbReference type="Gene3D" id="1.10.10.160">
    <property type="match status" value="1"/>
</dbReference>
<dbReference type="Gene3D" id="3.40.50.300">
    <property type="entry name" value="P-loop containing nucleotide triphosphate hydrolases"/>
    <property type="match status" value="2"/>
</dbReference>
<dbReference type="Gene3D" id="1.10.486.10">
    <property type="entry name" value="PCRA, domain 4"/>
    <property type="match status" value="1"/>
</dbReference>
<dbReference type="InterPro" id="IPR005751">
    <property type="entry name" value="ATP-dep_DNA_helicase_PcrA"/>
</dbReference>
<dbReference type="InterPro" id="IPR013986">
    <property type="entry name" value="DExx_box_DNA_helicase_dom_sf"/>
</dbReference>
<dbReference type="InterPro" id="IPR014017">
    <property type="entry name" value="DNA_helicase_UvrD-like_C"/>
</dbReference>
<dbReference type="InterPro" id="IPR000212">
    <property type="entry name" value="DNA_helicase_UvrD/REP"/>
</dbReference>
<dbReference type="InterPro" id="IPR027417">
    <property type="entry name" value="P-loop_NTPase"/>
</dbReference>
<dbReference type="InterPro" id="IPR014016">
    <property type="entry name" value="UvrD-like_ATP-bd"/>
</dbReference>
<dbReference type="NCBIfam" id="TIGR01073">
    <property type="entry name" value="pcrA"/>
    <property type="match status" value="1"/>
</dbReference>
<dbReference type="PANTHER" id="PTHR11070:SF2">
    <property type="entry name" value="ATP-DEPENDENT DNA HELICASE SRS2"/>
    <property type="match status" value="1"/>
</dbReference>
<dbReference type="PANTHER" id="PTHR11070">
    <property type="entry name" value="UVRD / RECB / PCRA DNA HELICASE FAMILY MEMBER"/>
    <property type="match status" value="1"/>
</dbReference>
<dbReference type="Pfam" id="PF21196">
    <property type="entry name" value="PcrA_UvrD_tudor"/>
    <property type="match status" value="1"/>
</dbReference>
<dbReference type="Pfam" id="PF00580">
    <property type="entry name" value="UvrD-helicase"/>
    <property type="match status" value="1"/>
</dbReference>
<dbReference type="Pfam" id="PF13361">
    <property type="entry name" value="UvrD_C"/>
    <property type="match status" value="1"/>
</dbReference>
<dbReference type="SUPFAM" id="SSF52540">
    <property type="entry name" value="P-loop containing nucleoside triphosphate hydrolases"/>
    <property type="match status" value="1"/>
</dbReference>
<dbReference type="PROSITE" id="PS51198">
    <property type="entry name" value="UVRD_HELICASE_ATP_BIND"/>
    <property type="match status" value="1"/>
</dbReference>
<dbReference type="PROSITE" id="PS51217">
    <property type="entry name" value="UVRD_HELICASE_CTER"/>
    <property type="match status" value="1"/>
</dbReference>
<gene>
    <name type="primary">pcrA</name>
    <name type="ordered locus">MW1846</name>
</gene>